<feature type="chain" id="PRO_0000306864" description="Pleckstrin homology domain-containing family G member 3">
    <location>
        <begin position="1"/>
        <end position="1341"/>
    </location>
</feature>
<feature type="domain" description="DH" evidence="2">
    <location>
        <begin position="93"/>
        <end position="272"/>
    </location>
</feature>
<feature type="domain" description="PH" evidence="3">
    <location>
        <begin position="296"/>
        <end position="394"/>
    </location>
</feature>
<feature type="region of interest" description="Disordered" evidence="4">
    <location>
        <begin position="1"/>
        <end position="68"/>
    </location>
</feature>
<feature type="region of interest" description="Disordered" evidence="4">
    <location>
        <begin position="433"/>
        <end position="482"/>
    </location>
</feature>
<feature type="region of interest" description="Disordered" evidence="4">
    <location>
        <begin position="508"/>
        <end position="657"/>
    </location>
</feature>
<feature type="region of interest" description="Disordered" evidence="4">
    <location>
        <begin position="684"/>
        <end position="715"/>
    </location>
</feature>
<feature type="region of interest" description="Disordered" evidence="4">
    <location>
        <begin position="775"/>
        <end position="832"/>
    </location>
</feature>
<feature type="region of interest" description="Disordered" evidence="4">
    <location>
        <begin position="876"/>
        <end position="930"/>
    </location>
</feature>
<feature type="region of interest" description="Disordered" evidence="4">
    <location>
        <begin position="939"/>
        <end position="958"/>
    </location>
</feature>
<feature type="region of interest" description="Disordered" evidence="4">
    <location>
        <begin position="1071"/>
        <end position="1097"/>
    </location>
</feature>
<feature type="region of interest" description="Disordered" evidence="4">
    <location>
        <begin position="1117"/>
        <end position="1162"/>
    </location>
</feature>
<feature type="region of interest" description="Disordered" evidence="4">
    <location>
        <begin position="1204"/>
        <end position="1249"/>
    </location>
</feature>
<feature type="region of interest" description="Disordered" evidence="4">
    <location>
        <begin position="1271"/>
        <end position="1341"/>
    </location>
</feature>
<feature type="compositionally biased region" description="Low complexity" evidence="4">
    <location>
        <begin position="18"/>
        <end position="29"/>
    </location>
</feature>
<feature type="compositionally biased region" description="Polar residues" evidence="4">
    <location>
        <begin position="42"/>
        <end position="51"/>
    </location>
</feature>
<feature type="compositionally biased region" description="Polar residues" evidence="4">
    <location>
        <begin position="59"/>
        <end position="68"/>
    </location>
</feature>
<feature type="compositionally biased region" description="Acidic residues" evidence="4">
    <location>
        <begin position="529"/>
        <end position="541"/>
    </location>
</feature>
<feature type="compositionally biased region" description="Acidic residues" evidence="4">
    <location>
        <begin position="570"/>
        <end position="580"/>
    </location>
</feature>
<feature type="compositionally biased region" description="Acidic residues" evidence="4">
    <location>
        <begin position="695"/>
        <end position="707"/>
    </location>
</feature>
<feature type="compositionally biased region" description="Polar residues" evidence="4">
    <location>
        <begin position="798"/>
        <end position="810"/>
    </location>
</feature>
<feature type="compositionally biased region" description="Basic and acidic residues" evidence="4">
    <location>
        <begin position="817"/>
        <end position="832"/>
    </location>
</feature>
<feature type="compositionally biased region" description="Basic and acidic residues" evidence="4">
    <location>
        <begin position="939"/>
        <end position="948"/>
    </location>
</feature>
<feature type="compositionally biased region" description="Polar residues" evidence="4">
    <location>
        <begin position="949"/>
        <end position="958"/>
    </location>
</feature>
<feature type="compositionally biased region" description="Polar residues" evidence="4">
    <location>
        <begin position="1135"/>
        <end position="1162"/>
    </location>
</feature>
<feature type="compositionally biased region" description="Basic and acidic residues" evidence="4">
    <location>
        <begin position="1309"/>
        <end position="1320"/>
    </location>
</feature>
<feature type="modified residue" description="Phosphoserine" evidence="1">
    <location>
        <position position="76"/>
    </location>
</feature>
<feature type="modified residue" description="Phosphoserine" evidence="10">
    <location>
        <position position="433"/>
    </location>
</feature>
<feature type="modified residue" description="Phosphoserine" evidence="9 10">
    <location>
        <position position="502"/>
    </location>
</feature>
<feature type="modified residue" description="Phosphoserine" evidence="9 10">
    <location>
        <position position="571"/>
    </location>
</feature>
<feature type="modified residue" description="Phosphoserine" evidence="1">
    <location>
        <position position="694"/>
    </location>
</feature>
<feature type="modified residue" description="Phosphoserine" evidence="1">
    <location>
        <position position="695"/>
    </location>
</feature>
<feature type="modified residue" description="Phosphoserine" evidence="10">
    <location>
        <position position="737"/>
    </location>
</feature>
<feature type="modified residue" description="Phosphoserine" evidence="1">
    <location>
        <position position="759"/>
    </location>
</feature>
<feature type="modified residue" description="Phosphoserine" evidence="10">
    <location>
        <position position="762"/>
    </location>
</feature>
<feature type="modified residue" description="Phosphoserine" evidence="10">
    <location>
        <position position="766"/>
    </location>
</feature>
<feature type="modified residue" description="Phosphoserine" evidence="1">
    <location>
        <position position="862"/>
    </location>
</feature>
<feature type="modified residue" description="Phosphoserine" evidence="10">
    <location>
        <position position="899"/>
    </location>
</feature>
<feature type="modified residue" description="Phosphoserine" evidence="10">
    <location>
        <position position="900"/>
    </location>
</feature>
<feature type="modified residue" description="Phosphoserine" evidence="1">
    <location>
        <position position="947"/>
    </location>
</feature>
<feature type="modified residue" description="Phosphoserine" evidence="1">
    <location>
        <position position="1129"/>
    </location>
</feature>
<feature type="modified residue" description="Phosphoserine" evidence="10">
    <location>
        <position position="1134"/>
    </location>
</feature>
<feature type="modified residue" description="Phosphoserine" evidence="10">
    <location>
        <position position="1136"/>
    </location>
</feature>
<feature type="modified residue" description="Phosphoserine" evidence="10">
    <location>
        <position position="1141"/>
    </location>
</feature>
<feature type="modified residue" description="Phosphoserine" evidence="10">
    <location>
        <position position="1155"/>
    </location>
</feature>
<feature type="modified residue" description="Phosphoserine" evidence="10">
    <location>
        <position position="1158"/>
    </location>
</feature>
<feature type="modified residue" description="Phosphoserine" evidence="1">
    <location>
        <position position="1201"/>
    </location>
</feature>
<feature type="splice variant" id="VSP_028535" description="In isoform 5." evidence="5">
    <location>
        <begin position="1"/>
        <end position="613"/>
    </location>
</feature>
<feature type="splice variant" id="VSP_028536" description="In isoform 4." evidence="5">
    <location>
        <begin position="1"/>
        <end position="197"/>
    </location>
</feature>
<feature type="splice variant" id="VSP_028537" description="In isoform 4." evidence="5">
    <original>YPSRYRCSPERMKKAW</original>
    <variation>CKLPFSACFIPNCVHG</variation>
    <location>
        <begin position="416"/>
        <end position="431"/>
    </location>
</feature>
<feature type="splice variant" id="VSP_028538" description="In isoform 4." evidence="5">
    <location>
        <begin position="432"/>
        <end position="1341"/>
    </location>
</feature>
<feature type="splice variant" id="VSP_028539" description="In isoform 3." evidence="6">
    <original>EPGHTLFSRATLPSRQQGFEMPGLKGRRKSEPTRHLLRQLSEKARAVGMKHAGSAGALLDFGQPAHAQKQQPEAERAAREELEEEEELVEEEEQRQQSFSGSLEGLAGHDGSEKVPGPELPGSEEEEEEEESLAVAEQGKRHRESEGSKGCRRPSNRSPTSAEKRMSFESVSSLPEVET</original>
    <variation>GEGRAVWTRTFFLGSLAQAGIICSDIVGRWSLQKAGEDSRVGWWMSVDRFLFMPGFPSNNHLLCLLLTRAVHLLKGLGMFVIQDLASLLSHLNLLALLLSQSSTWKSWDSFSVQVSSDSRGWVGGKTLRPSGTKSRQEIFILGHAIFLSWVFFHDGICLCARGVIRMKRLLREDKNLAL</variation>
    <location>
        <begin position="449"/>
        <end position="627"/>
    </location>
</feature>
<feature type="splice variant" id="VSP_028540" description="In isoform 2." evidence="6">
    <location>
        <begin position="451"/>
        <end position="480"/>
    </location>
</feature>
<feature type="splice variant" id="VSP_028541" description="In isoform 2." evidence="6">
    <original>Q</original>
    <variation>QVADFASSLLAALHCWHYRANALLFSRGAM</variation>
    <location>
        <position position="586"/>
    </location>
</feature>
<feature type="splice variant" id="VSP_028542" description="In isoform 3." evidence="6">
    <location>
        <begin position="628"/>
        <end position="1341"/>
    </location>
</feature>
<feature type="sequence conflict" description="In Ref. 1; BAE36687." evidence="7" ref="1">
    <original>Q</original>
    <variation>K</variation>
    <location>
        <position position="203"/>
    </location>
</feature>
<feature type="sequence conflict" description="In Ref. 1; BAE36687." evidence="7" ref="1">
    <original>H</original>
    <variation>Q</variation>
    <location>
        <position position="216"/>
    </location>
</feature>
<feature type="sequence conflict" description="In Ref. 4; BAD32255." evidence="7" ref="4">
    <original>SLAVAE</original>
    <variation>ADFCLL</variation>
    <location>
        <begin position="580"/>
        <end position="585"/>
    </location>
</feature>
<feature type="sequence conflict" description="In Ref. 3; AAH96443/AAH31136." evidence="7" ref="3">
    <original>C</original>
    <variation>R</variation>
    <location>
        <position position="929"/>
    </location>
</feature>
<comment type="function">
    <text evidence="1">Plays a role in controlling cell polarity and cell motility by selectively binding newly polymerized actin and activating RAC1 and CDC42 to enhance local actin polymerization.</text>
</comment>
<comment type="subcellular location">
    <subcellularLocation>
        <location evidence="1">Cytoplasm</location>
        <location evidence="1">Cytoskeleton</location>
    </subcellularLocation>
    <text evidence="1">Colocalizes with actin at the leading edge of polarized cells.</text>
</comment>
<comment type="alternative products">
    <event type="alternative splicing"/>
    <isoform>
        <id>Q4VAC9-1</id>
        <name>1</name>
        <sequence type="displayed"/>
    </isoform>
    <isoform>
        <id>Q4VAC9-2</id>
        <name>2</name>
        <sequence type="described" ref="VSP_028540 VSP_028541"/>
    </isoform>
    <isoform>
        <id>Q4VAC9-3</id>
        <name>3</name>
        <sequence type="described" ref="VSP_028539 VSP_028542"/>
    </isoform>
    <isoform>
        <id>Q4VAC9-4</id>
        <name>4</name>
        <sequence type="described" ref="VSP_028536 VSP_028537 VSP_028538"/>
    </isoform>
    <isoform>
        <id>Q4VAC9-5</id>
        <name>5</name>
        <sequence type="described" ref="VSP_028535"/>
    </isoform>
</comment>
<comment type="sequence caution" evidence="7">
    <conflict type="erroneous initiation">
        <sequence resource="EMBL-CDS" id="BAE36687"/>
    </conflict>
    <text>Extended N-terminus.</text>
</comment>
<gene>
    <name evidence="8" type="primary">Plekhg3</name>
    <name type="synonym">Kiaa0599</name>
</gene>
<accession>Q4VAC9</accession>
<accession>E9QL46</accession>
<accession>Q3TSI8</accession>
<accession>Q6A041</accession>
<accession>Q8BJP5</accession>
<accession>Q8K0L5</accession>
<accession>Q8K0T6</accession>
<dbReference type="EMBL" id="AK080928">
    <property type="protein sequence ID" value="BAC38083.1"/>
    <property type="molecule type" value="mRNA"/>
</dbReference>
<dbReference type="EMBL" id="AK162025">
    <property type="protein sequence ID" value="BAE36687.1"/>
    <property type="status" value="ALT_INIT"/>
    <property type="molecule type" value="mRNA"/>
</dbReference>
<dbReference type="EMBL" id="AC163033">
    <property type="status" value="NOT_ANNOTATED_CDS"/>
    <property type="molecule type" value="Genomic_DNA"/>
</dbReference>
<dbReference type="EMBL" id="BC030417">
    <property type="protein sequence ID" value="AAH30417.1"/>
    <property type="molecule type" value="mRNA"/>
</dbReference>
<dbReference type="EMBL" id="BC031136">
    <property type="protein sequence ID" value="AAH31136.1"/>
    <property type="molecule type" value="mRNA"/>
</dbReference>
<dbReference type="EMBL" id="BC049264">
    <property type="protein sequence ID" value="AAH49264.1"/>
    <property type="molecule type" value="mRNA"/>
</dbReference>
<dbReference type="EMBL" id="BC096443">
    <property type="protein sequence ID" value="AAH96443.1"/>
    <property type="molecule type" value="mRNA"/>
</dbReference>
<dbReference type="EMBL" id="AK172977">
    <property type="protein sequence ID" value="BAD32255.1"/>
    <property type="molecule type" value="mRNA"/>
</dbReference>
<dbReference type="CCDS" id="CCDS25994.1">
    <molecule id="Q4VAC9-1"/>
</dbReference>
<dbReference type="RefSeq" id="NP_001390126.1">
    <molecule id="Q4VAC9-2"/>
    <property type="nucleotide sequence ID" value="NM_001403197.1"/>
</dbReference>
<dbReference type="RefSeq" id="NP_722499.4">
    <molecule id="Q4VAC9-1"/>
    <property type="nucleotide sequence ID" value="NM_153804.4"/>
</dbReference>
<dbReference type="RefSeq" id="XP_006515938.1">
    <property type="nucleotide sequence ID" value="XM_006515875.3"/>
</dbReference>
<dbReference type="SMR" id="Q4VAC9"/>
<dbReference type="BioGRID" id="234453">
    <property type="interactions" value="1"/>
</dbReference>
<dbReference type="DIP" id="DIP-49616N"/>
<dbReference type="FunCoup" id="Q4VAC9">
    <property type="interactions" value="67"/>
</dbReference>
<dbReference type="IntAct" id="Q4VAC9">
    <property type="interactions" value="2"/>
</dbReference>
<dbReference type="STRING" id="10090.ENSMUSP00000074729"/>
<dbReference type="GlyGen" id="Q4VAC9">
    <property type="glycosylation" value="1 site"/>
</dbReference>
<dbReference type="iPTMnet" id="Q4VAC9"/>
<dbReference type="PhosphoSitePlus" id="Q4VAC9"/>
<dbReference type="jPOST" id="Q4VAC9"/>
<dbReference type="PaxDb" id="10090-ENSMUSP00000074729"/>
<dbReference type="PeptideAtlas" id="Q4VAC9"/>
<dbReference type="ProteomicsDB" id="288225">
    <molecule id="Q4VAC9-1"/>
</dbReference>
<dbReference type="ProteomicsDB" id="288226">
    <molecule id="Q4VAC9-2"/>
</dbReference>
<dbReference type="ProteomicsDB" id="288227">
    <molecule id="Q4VAC9-3"/>
</dbReference>
<dbReference type="ProteomicsDB" id="288228">
    <molecule id="Q4VAC9-4"/>
</dbReference>
<dbReference type="ProteomicsDB" id="288229">
    <molecule id="Q4VAC9-5"/>
</dbReference>
<dbReference type="Pumba" id="Q4VAC9"/>
<dbReference type="Antibodypedia" id="57155">
    <property type="antibodies" value="78 antibodies from 11 providers"/>
</dbReference>
<dbReference type="DNASU" id="263406"/>
<dbReference type="Ensembl" id="ENSMUST00000075249.6">
    <molecule id="Q4VAC9-1"/>
    <property type="protein sequence ID" value="ENSMUSP00000074729.5"/>
    <property type="gene ID" value="ENSMUSG00000052609.10"/>
</dbReference>
<dbReference type="Ensembl" id="ENSMUST00000219063.2">
    <molecule id="Q4VAC9-2"/>
    <property type="protein sequence ID" value="ENSMUSP00000151851.2"/>
    <property type="gene ID" value="ENSMUSG00000052609.10"/>
</dbReference>
<dbReference type="GeneID" id="263406"/>
<dbReference type="KEGG" id="mmu:263406"/>
<dbReference type="UCSC" id="uc007nyi.2">
    <molecule id="Q4VAC9-3"/>
    <property type="organism name" value="mouse"/>
</dbReference>
<dbReference type="UCSC" id="uc007nyj.2">
    <molecule id="Q4VAC9-2"/>
    <property type="organism name" value="mouse"/>
</dbReference>
<dbReference type="UCSC" id="uc007nyk.2">
    <molecule id="Q4VAC9-1"/>
    <property type="organism name" value="mouse"/>
</dbReference>
<dbReference type="UCSC" id="uc029rtp.1">
    <molecule id="Q4VAC9-4"/>
    <property type="organism name" value="mouse"/>
</dbReference>
<dbReference type="AGR" id="MGI:2388284"/>
<dbReference type="CTD" id="26030"/>
<dbReference type="MGI" id="MGI:2388284">
    <property type="gene designation" value="Plekhg3"/>
</dbReference>
<dbReference type="VEuPathDB" id="HostDB:ENSMUSG00000052609"/>
<dbReference type="eggNOG" id="KOG3518">
    <property type="taxonomic scope" value="Eukaryota"/>
</dbReference>
<dbReference type="GeneTree" id="ENSGT00940000156521"/>
<dbReference type="HOGENOM" id="CLU_007600_0_0_1"/>
<dbReference type="InParanoid" id="Q4VAC9"/>
<dbReference type="OMA" id="VKMWERM"/>
<dbReference type="OrthoDB" id="1594986at2759"/>
<dbReference type="PhylomeDB" id="Q4VAC9"/>
<dbReference type="TreeFam" id="TF328565"/>
<dbReference type="Reactome" id="R-MMU-8980692">
    <property type="pathway name" value="RHOA GTPase cycle"/>
</dbReference>
<dbReference type="Reactome" id="R-MMU-9013148">
    <property type="pathway name" value="CDC42 GTPase cycle"/>
</dbReference>
<dbReference type="Reactome" id="R-MMU-9013149">
    <property type="pathway name" value="RAC1 GTPase cycle"/>
</dbReference>
<dbReference type="Reactome" id="R-MMU-9013406">
    <property type="pathway name" value="RHOQ GTPase cycle"/>
</dbReference>
<dbReference type="Reactome" id="R-MMU-9013408">
    <property type="pathway name" value="RHOG GTPase cycle"/>
</dbReference>
<dbReference type="BioGRID-ORCS" id="263406">
    <property type="hits" value="3 hits in 78 CRISPR screens"/>
</dbReference>
<dbReference type="ChiTaRS" id="Plekhg3">
    <property type="organism name" value="mouse"/>
</dbReference>
<dbReference type="PRO" id="PR:Q4VAC9"/>
<dbReference type="Proteomes" id="UP000000589">
    <property type="component" value="Chromosome 12"/>
</dbReference>
<dbReference type="RNAct" id="Q4VAC9">
    <property type="molecule type" value="protein"/>
</dbReference>
<dbReference type="Bgee" id="ENSMUSG00000052609">
    <property type="expression patterns" value="Expressed in ascending aorta and 192 other cell types or tissues"/>
</dbReference>
<dbReference type="ExpressionAtlas" id="Q4VAC9">
    <property type="expression patterns" value="baseline and differential"/>
</dbReference>
<dbReference type="GO" id="GO:0005737">
    <property type="term" value="C:cytoplasm"/>
    <property type="evidence" value="ECO:0007669"/>
    <property type="project" value="UniProtKB-KW"/>
</dbReference>
<dbReference type="GO" id="GO:0005856">
    <property type="term" value="C:cytoskeleton"/>
    <property type="evidence" value="ECO:0007669"/>
    <property type="project" value="UniProtKB-SubCell"/>
</dbReference>
<dbReference type="GO" id="GO:0003779">
    <property type="term" value="F:actin binding"/>
    <property type="evidence" value="ECO:0000250"/>
    <property type="project" value="UniProtKB"/>
</dbReference>
<dbReference type="GO" id="GO:0005085">
    <property type="term" value="F:guanyl-nucleotide exchange factor activity"/>
    <property type="evidence" value="ECO:0007669"/>
    <property type="project" value="InterPro"/>
</dbReference>
<dbReference type="GO" id="GO:0030334">
    <property type="term" value="P:regulation of cell migration"/>
    <property type="evidence" value="ECO:0000250"/>
    <property type="project" value="UniProtKB"/>
</dbReference>
<dbReference type="GO" id="GO:2000114">
    <property type="term" value="P:regulation of establishment of cell polarity"/>
    <property type="evidence" value="ECO:0000250"/>
    <property type="project" value="UniProtKB"/>
</dbReference>
<dbReference type="CDD" id="cd13243">
    <property type="entry name" value="PH_PLEKHG1_G2_G3"/>
    <property type="match status" value="1"/>
</dbReference>
<dbReference type="CDD" id="cd00160">
    <property type="entry name" value="RhoGEF"/>
    <property type="match status" value="1"/>
</dbReference>
<dbReference type="FunFam" id="1.20.900.10:FF:000019">
    <property type="entry name" value="Pleckstrin homology domain-containing family G member 1"/>
    <property type="match status" value="1"/>
</dbReference>
<dbReference type="Gene3D" id="1.20.900.10">
    <property type="entry name" value="Dbl homology (DH) domain"/>
    <property type="match status" value="1"/>
</dbReference>
<dbReference type="Gene3D" id="2.30.29.30">
    <property type="entry name" value="Pleckstrin-homology domain (PH domain)/Phosphotyrosine-binding domain (PTB)"/>
    <property type="match status" value="1"/>
</dbReference>
<dbReference type="InterPro" id="IPR035899">
    <property type="entry name" value="DBL_dom_sf"/>
</dbReference>
<dbReference type="InterPro" id="IPR000219">
    <property type="entry name" value="DH_dom"/>
</dbReference>
<dbReference type="InterPro" id="IPR011993">
    <property type="entry name" value="PH-like_dom_sf"/>
</dbReference>
<dbReference type="InterPro" id="IPR001849">
    <property type="entry name" value="PH_domain"/>
</dbReference>
<dbReference type="InterPro" id="IPR043324">
    <property type="entry name" value="PH_PLEKHG1_G2_G3"/>
</dbReference>
<dbReference type="InterPro" id="IPR055251">
    <property type="entry name" value="SOS1_NGEF_PH"/>
</dbReference>
<dbReference type="PANTHER" id="PTHR45924">
    <property type="entry name" value="FI17866P1"/>
    <property type="match status" value="1"/>
</dbReference>
<dbReference type="PANTHER" id="PTHR45924:SF4">
    <property type="entry name" value="PLECKSTRIN HOMOLOGY DOMAIN-CONTAINING FAMILY G MEMBER 3"/>
    <property type="match status" value="1"/>
</dbReference>
<dbReference type="Pfam" id="PF00621">
    <property type="entry name" value="RhoGEF"/>
    <property type="match status" value="1"/>
</dbReference>
<dbReference type="Pfam" id="PF22697">
    <property type="entry name" value="SOS1_NGEF_PH"/>
    <property type="match status" value="1"/>
</dbReference>
<dbReference type="SMART" id="SM00233">
    <property type="entry name" value="PH"/>
    <property type="match status" value="1"/>
</dbReference>
<dbReference type="SMART" id="SM00325">
    <property type="entry name" value="RhoGEF"/>
    <property type="match status" value="1"/>
</dbReference>
<dbReference type="SUPFAM" id="SSF48065">
    <property type="entry name" value="DBL homology domain (DH-domain)"/>
    <property type="match status" value="1"/>
</dbReference>
<dbReference type="SUPFAM" id="SSF50729">
    <property type="entry name" value="PH domain-like"/>
    <property type="match status" value="1"/>
</dbReference>
<dbReference type="PROSITE" id="PS50010">
    <property type="entry name" value="DH_2"/>
    <property type="match status" value="1"/>
</dbReference>
<dbReference type="PROSITE" id="PS50003">
    <property type="entry name" value="PH_DOMAIN"/>
    <property type="match status" value="1"/>
</dbReference>
<keyword id="KW-0025">Alternative splicing</keyword>
<keyword id="KW-0963">Cytoplasm</keyword>
<keyword id="KW-0206">Cytoskeleton</keyword>
<keyword id="KW-0597">Phosphoprotein</keyword>
<keyword id="KW-1185">Reference proteome</keyword>
<proteinExistence type="evidence at protein level"/>
<organism>
    <name type="scientific">Mus musculus</name>
    <name type="common">Mouse</name>
    <dbReference type="NCBI Taxonomy" id="10090"/>
    <lineage>
        <taxon>Eukaryota</taxon>
        <taxon>Metazoa</taxon>
        <taxon>Chordata</taxon>
        <taxon>Craniata</taxon>
        <taxon>Vertebrata</taxon>
        <taxon>Euteleostomi</taxon>
        <taxon>Mammalia</taxon>
        <taxon>Eutheria</taxon>
        <taxon>Euarchontoglires</taxon>
        <taxon>Glires</taxon>
        <taxon>Rodentia</taxon>
        <taxon>Myomorpha</taxon>
        <taxon>Muroidea</taxon>
        <taxon>Muridae</taxon>
        <taxon>Murinae</taxon>
        <taxon>Mus</taxon>
        <taxon>Mus</taxon>
    </lineage>
</organism>
<protein>
    <recommendedName>
        <fullName>Pleckstrin homology domain-containing family G member 3</fullName>
        <shortName evidence="7">PH domain-containing family G member 3</shortName>
    </recommendedName>
</protein>
<sequence>MPVSTALHQDGSQERPRSLVSTTSSSGSSRDSHSAMEEPTGSEASAQNGTGSPWDRHVPNSNNNSSGWLNMKGPLSPFNGRAGTSPAYHKLSYLGRVVREIVETERMYVQDLRSIVEDYLLKIIDTPGLLKPEQVSALFGNIESIYALNSQLLRDLDSCNSDPVAVASCFVERSQEFDIYTQYCNNYPNSVAALTECMQDKQQAKFFRDRQELLQHSLPLGSYLLKPVQRVLKYHLLLQEIAKHFDEEEDGFEVVEDAIDTMTCVAWYINDMKRRHEHAVRLQEIQSLLINWKGPDLTTYGELVLEATFRVHRVRNDRTFFLFDKILLITKKRGDHFVYKGHIPCSSLMLIESTRDSLCFTVTHYKHSKQQYSIQAKTVEEKRSWTHHIKRLILENHHATIPQKAKEAILEMDSYYPSRYRCSPERMKKAWSSQDEVSSHVRQGRRQSEPGHTLFSRATLPSRQQGFEMPGLKGRRKSEPTRHLLRQLSEKARAVGMKHAGSAGALLDFGQPAHAQKQQPEAERAAREELEEEEELVEEEEQRQQSFSGSLEGLAGHDGSEKVPGPELPGSEEEEEEEESLAVAEQGKRHRESEGSKGCRRPSNRSPTSAEKRMSFESVSSLPEVETDPEPGAEQEAFAALEGPSTEEMPSDPEFPEALETQLHAPKGLLGVDNPAAVVDFVEPEGSEDLKPLSSEEEEEEEMEAAQEPESLLPPSVLDQASVIAERFASSFSRRSSLAIEDGKSSGLGTPRLISRSSSVLSLEGSDKGLARWSSIGDSLSNPPTPEVIIGADMVTDNGPSVNGTESPSAGSGCPTEQDRSSCKKKESALSTRDRQLLDKIKNYYENAEHHDAGFSIRRRESLSYIPKGLVRSSVSRFNSLPKPDSEPAAPVGYKRPGSSRPASWTLFDLPGPRTDKGDPAPITDAEFCPSSEIAKIWERMESSERSPRTGSGQSQANGFELQEPLFILEEHELGAITEESAVASPESASPTEQPSPAHLARELKELVKELSSSVQGELVTPLHPRIVQLSHVMDSHVSERVKNKVYQLARQYSLRIKNIKAARPPLQWEKVTPDQEEQVPSISGLPEEAGELSGGKARRKPVLSLLSYEQLVAQEHGTSKSSAAVETSPRRFSFSPSAVSPRTTSPGARSSARSPLSPFDTETFNWPDVRELCSKYTSHDKTAQVESSWPRSLLVNRSRSLPENIVEPPMSGKADRCCGLNTHRRLGDGEASQPPLPESPPQSQLNGGDALYVTADLTLENNQRVIIMEKGPHPSSTVGLEEDSGKESSSPVALKGQGQGFQASAEYQPKEHGPRDSADTNKQGRVRNLREKFQALNSVG</sequence>
<name>PKHG3_MOUSE</name>
<evidence type="ECO:0000250" key="1">
    <source>
        <dbReference type="UniProtKB" id="A1L390"/>
    </source>
</evidence>
<evidence type="ECO:0000255" key="2">
    <source>
        <dbReference type="PROSITE-ProRule" id="PRU00062"/>
    </source>
</evidence>
<evidence type="ECO:0000255" key="3">
    <source>
        <dbReference type="PROSITE-ProRule" id="PRU00145"/>
    </source>
</evidence>
<evidence type="ECO:0000256" key="4">
    <source>
        <dbReference type="SAM" id="MobiDB-lite"/>
    </source>
</evidence>
<evidence type="ECO:0000303" key="5">
    <source>
    </source>
</evidence>
<evidence type="ECO:0000303" key="6">
    <source>
    </source>
</evidence>
<evidence type="ECO:0000305" key="7"/>
<evidence type="ECO:0000312" key="8">
    <source>
        <dbReference type="MGI" id="MGI:2388284"/>
    </source>
</evidence>
<evidence type="ECO:0007744" key="9">
    <source>
    </source>
</evidence>
<evidence type="ECO:0007744" key="10">
    <source>
    </source>
</evidence>
<reference key="1">
    <citation type="journal article" date="2005" name="Science">
        <title>The transcriptional landscape of the mammalian genome.</title>
        <authorList>
            <person name="Carninci P."/>
            <person name="Kasukawa T."/>
            <person name="Katayama S."/>
            <person name="Gough J."/>
            <person name="Frith M.C."/>
            <person name="Maeda N."/>
            <person name="Oyama R."/>
            <person name="Ravasi T."/>
            <person name="Lenhard B."/>
            <person name="Wells C."/>
            <person name="Kodzius R."/>
            <person name="Shimokawa K."/>
            <person name="Bajic V.B."/>
            <person name="Brenner S.E."/>
            <person name="Batalov S."/>
            <person name="Forrest A.R."/>
            <person name="Zavolan M."/>
            <person name="Davis M.J."/>
            <person name="Wilming L.G."/>
            <person name="Aidinis V."/>
            <person name="Allen J.E."/>
            <person name="Ambesi-Impiombato A."/>
            <person name="Apweiler R."/>
            <person name="Aturaliya R.N."/>
            <person name="Bailey T.L."/>
            <person name="Bansal M."/>
            <person name="Baxter L."/>
            <person name="Beisel K.W."/>
            <person name="Bersano T."/>
            <person name="Bono H."/>
            <person name="Chalk A.M."/>
            <person name="Chiu K.P."/>
            <person name="Choudhary V."/>
            <person name="Christoffels A."/>
            <person name="Clutterbuck D.R."/>
            <person name="Crowe M.L."/>
            <person name="Dalla E."/>
            <person name="Dalrymple B.P."/>
            <person name="de Bono B."/>
            <person name="Della Gatta G."/>
            <person name="di Bernardo D."/>
            <person name="Down T."/>
            <person name="Engstrom P."/>
            <person name="Fagiolini M."/>
            <person name="Faulkner G."/>
            <person name="Fletcher C.F."/>
            <person name="Fukushima T."/>
            <person name="Furuno M."/>
            <person name="Futaki S."/>
            <person name="Gariboldi M."/>
            <person name="Georgii-Hemming P."/>
            <person name="Gingeras T.R."/>
            <person name="Gojobori T."/>
            <person name="Green R.E."/>
            <person name="Gustincich S."/>
            <person name="Harbers M."/>
            <person name="Hayashi Y."/>
            <person name="Hensch T.K."/>
            <person name="Hirokawa N."/>
            <person name="Hill D."/>
            <person name="Huminiecki L."/>
            <person name="Iacono M."/>
            <person name="Ikeo K."/>
            <person name="Iwama A."/>
            <person name="Ishikawa T."/>
            <person name="Jakt M."/>
            <person name="Kanapin A."/>
            <person name="Katoh M."/>
            <person name="Kawasawa Y."/>
            <person name="Kelso J."/>
            <person name="Kitamura H."/>
            <person name="Kitano H."/>
            <person name="Kollias G."/>
            <person name="Krishnan S.P."/>
            <person name="Kruger A."/>
            <person name="Kummerfeld S.K."/>
            <person name="Kurochkin I.V."/>
            <person name="Lareau L.F."/>
            <person name="Lazarevic D."/>
            <person name="Lipovich L."/>
            <person name="Liu J."/>
            <person name="Liuni S."/>
            <person name="McWilliam S."/>
            <person name="Madan Babu M."/>
            <person name="Madera M."/>
            <person name="Marchionni L."/>
            <person name="Matsuda H."/>
            <person name="Matsuzawa S."/>
            <person name="Miki H."/>
            <person name="Mignone F."/>
            <person name="Miyake S."/>
            <person name="Morris K."/>
            <person name="Mottagui-Tabar S."/>
            <person name="Mulder N."/>
            <person name="Nakano N."/>
            <person name="Nakauchi H."/>
            <person name="Ng P."/>
            <person name="Nilsson R."/>
            <person name="Nishiguchi S."/>
            <person name="Nishikawa S."/>
            <person name="Nori F."/>
            <person name="Ohara O."/>
            <person name="Okazaki Y."/>
            <person name="Orlando V."/>
            <person name="Pang K.C."/>
            <person name="Pavan W.J."/>
            <person name="Pavesi G."/>
            <person name="Pesole G."/>
            <person name="Petrovsky N."/>
            <person name="Piazza S."/>
            <person name="Reed J."/>
            <person name="Reid J.F."/>
            <person name="Ring B.Z."/>
            <person name="Ringwald M."/>
            <person name="Rost B."/>
            <person name="Ruan Y."/>
            <person name="Salzberg S.L."/>
            <person name="Sandelin A."/>
            <person name="Schneider C."/>
            <person name="Schoenbach C."/>
            <person name="Sekiguchi K."/>
            <person name="Semple C.A."/>
            <person name="Seno S."/>
            <person name="Sessa L."/>
            <person name="Sheng Y."/>
            <person name="Shibata Y."/>
            <person name="Shimada H."/>
            <person name="Shimada K."/>
            <person name="Silva D."/>
            <person name="Sinclair B."/>
            <person name="Sperling S."/>
            <person name="Stupka E."/>
            <person name="Sugiura K."/>
            <person name="Sultana R."/>
            <person name="Takenaka Y."/>
            <person name="Taki K."/>
            <person name="Tammoja K."/>
            <person name="Tan S.L."/>
            <person name="Tang S."/>
            <person name="Taylor M.S."/>
            <person name="Tegner J."/>
            <person name="Teichmann S.A."/>
            <person name="Ueda H.R."/>
            <person name="van Nimwegen E."/>
            <person name="Verardo R."/>
            <person name="Wei C.L."/>
            <person name="Yagi K."/>
            <person name="Yamanishi H."/>
            <person name="Zabarovsky E."/>
            <person name="Zhu S."/>
            <person name="Zimmer A."/>
            <person name="Hide W."/>
            <person name="Bult C."/>
            <person name="Grimmond S.M."/>
            <person name="Teasdale R.D."/>
            <person name="Liu E.T."/>
            <person name="Brusic V."/>
            <person name="Quackenbush J."/>
            <person name="Wahlestedt C."/>
            <person name="Mattick J.S."/>
            <person name="Hume D.A."/>
            <person name="Kai C."/>
            <person name="Sasaki D."/>
            <person name="Tomaru Y."/>
            <person name="Fukuda S."/>
            <person name="Kanamori-Katayama M."/>
            <person name="Suzuki M."/>
            <person name="Aoki J."/>
            <person name="Arakawa T."/>
            <person name="Iida J."/>
            <person name="Imamura K."/>
            <person name="Itoh M."/>
            <person name="Kato T."/>
            <person name="Kawaji H."/>
            <person name="Kawagashira N."/>
            <person name="Kawashima T."/>
            <person name="Kojima M."/>
            <person name="Kondo S."/>
            <person name="Konno H."/>
            <person name="Nakano K."/>
            <person name="Ninomiya N."/>
            <person name="Nishio T."/>
            <person name="Okada M."/>
            <person name="Plessy C."/>
            <person name="Shibata K."/>
            <person name="Shiraki T."/>
            <person name="Suzuki S."/>
            <person name="Tagami M."/>
            <person name="Waki K."/>
            <person name="Watahiki A."/>
            <person name="Okamura-Oho Y."/>
            <person name="Suzuki H."/>
            <person name="Kawai J."/>
            <person name="Hayashizaki Y."/>
        </authorList>
    </citation>
    <scope>NUCLEOTIDE SEQUENCE [LARGE SCALE MRNA] (ISOFORM 3)</scope>
    <scope>NUCLEOTIDE SEQUENCE [LARGE SCALE MRNA] OF 1-697 (ISOFORM 2)</scope>
    <source>
        <strain>C57BL/6J</strain>
        <tissue>Adipose tissue</tissue>
        <tissue>Muellerian duct</tissue>
    </source>
</reference>
<reference key="2">
    <citation type="journal article" date="2009" name="PLoS Biol.">
        <title>Lineage-specific biology revealed by a finished genome assembly of the mouse.</title>
        <authorList>
            <person name="Church D.M."/>
            <person name="Goodstadt L."/>
            <person name="Hillier L.W."/>
            <person name="Zody M.C."/>
            <person name="Goldstein S."/>
            <person name="She X."/>
            <person name="Bult C.J."/>
            <person name="Agarwala R."/>
            <person name="Cherry J.L."/>
            <person name="DiCuccio M."/>
            <person name="Hlavina W."/>
            <person name="Kapustin Y."/>
            <person name="Meric P."/>
            <person name="Maglott D."/>
            <person name="Birtle Z."/>
            <person name="Marques A.C."/>
            <person name="Graves T."/>
            <person name="Zhou S."/>
            <person name="Teague B."/>
            <person name="Potamousis K."/>
            <person name="Churas C."/>
            <person name="Place M."/>
            <person name="Herschleb J."/>
            <person name="Runnheim R."/>
            <person name="Forrest D."/>
            <person name="Amos-Landgraf J."/>
            <person name="Schwartz D.C."/>
            <person name="Cheng Z."/>
            <person name="Lindblad-Toh K."/>
            <person name="Eichler E.E."/>
            <person name="Ponting C.P."/>
        </authorList>
    </citation>
    <scope>NUCLEOTIDE SEQUENCE [LARGE SCALE GENOMIC DNA]</scope>
    <source>
        <strain>C57BL/6J</strain>
    </source>
</reference>
<reference key="3">
    <citation type="journal article" date="2004" name="Genome Res.">
        <title>The status, quality, and expansion of the NIH full-length cDNA project: the Mammalian Gene Collection (MGC).</title>
        <authorList>
            <consortium name="The MGC Project Team"/>
        </authorList>
    </citation>
    <scope>NUCLEOTIDE SEQUENCE [LARGE SCALE MRNA] (ISOFORMS 1; 4 AND 5)</scope>
    <source>
        <strain>FVB/N</strain>
        <tissue>Eye</tissue>
        <tissue>Kidney</tissue>
        <tissue>Salivary gland</tissue>
    </source>
</reference>
<reference key="4">
    <citation type="journal article" date="2004" name="DNA Res.">
        <title>Prediction of the coding sequences of mouse homologues of KIAA gene: IV. The complete nucleotide sequences of 500 mouse KIAA-homologous cDNAs identified by screening of terminal sequences of cDNA clones randomly sampled from size-fractionated libraries.</title>
        <authorList>
            <person name="Okazaki N."/>
            <person name="Kikuno R."/>
            <person name="Ohara R."/>
            <person name="Inamoto S."/>
            <person name="Koseki H."/>
            <person name="Hiraoka S."/>
            <person name="Saga Y."/>
            <person name="Seino S."/>
            <person name="Nishimura M."/>
            <person name="Kaisho T."/>
            <person name="Hoshino K."/>
            <person name="Kitamura H."/>
            <person name="Nagase T."/>
            <person name="Ohara O."/>
            <person name="Koga H."/>
        </authorList>
    </citation>
    <scope>NUCLEOTIDE SEQUENCE [LARGE SCALE MRNA] OF 580-1341</scope>
    <source>
        <tissue>Brain</tissue>
    </source>
</reference>
<reference key="5">
    <citation type="journal article" date="2007" name="Proc. Natl. Acad. Sci. U.S.A.">
        <title>Large-scale phosphorylation analysis of mouse liver.</title>
        <authorList>
            <person name="Villen J."/>
            <person name="Beausoleil S.A."/>
            <person name="Gerber S.A."/>
            <person name="Gygi S.P."/>
        </authorList>
    </citation>
    <scope>PHOSPHORYLATION [LARGE SCALE ANALYSIS] AT SER-502 AND SER-571</scope>
    <scope>IDENTIFICATION BY MASS SPECTROMETRY [LARGE SCALE ANALYSIS]</scope>
    <source>
        <tissue>Liver</tissue>
    </source>
</reference>
<reference key="6">
    <citation type="journal article" date="2010" name="Cell">
        <title>A tissue-specific atlas of mouse protein phosphorylation and expression.</title>
        <authorList>
            <person name="Huttlin E.L."/>
            <person name="Jedrychowski M.P."/>
            <person name="Elias J.E."/>
            <person name="Goswami T."/>
            <person name="Rad R."/>
            <person name="Beausoleil S.A."/>
            <person name="Villen J."/>
            <person name="Haas W."/>
            <person name="Sowa M.E."/>
            <person name="Gygi S.P."/>
        </authorList>
    </citation>
    <scope>PHOSPHORYLATION [LARGE SCALE ANALYSIS] AT SER-433; SER-502; SER-571; SER-737; SER-762; SER-766; SER-899; SER-900; SER-1134; SER-1136; SER-1141; SER-1155 AND SER-1158</scope>
    <scope>IDENTIFICATION BY MASS SPECTROMETRY [LARGE SCALE ANALYSIS]</scope>
    <source>
        <tissue>Brain</tissue>
        <tissue>Kidney</tissue>
        <tissue>Liver</tissue>
        <tissue>Spleen</tissue>
        <tissue>Testis</tissue>
    </source>
</reference>